<gene>
    <name evidence="1" type="primary">csrA</name>
    <name type="synonym">zfiA</name>
    <name type="ordered locus">Z3998</name>
    <name type="ordered locus">ECs3553</name>
</gene>
<organism>
    <name type="scientific">Escherichia coli O157:H7</name>
    <dbReference type="NCBI Taxonomy" id="83334"/>
    <lineage>
        <taxon>Bacteria</taxon>
        <taxon>Pseudomonadati</taxon>
        <taxon>Pseudomonadota</taxon>
        <taxon>Gammaproteobacteria</taxon>
        <taxon>Enterobacterales</taxon>
        <taxon>Enterobacteriaceae</taxon>
        <taxon>Escherichia</taxon>
    </lineage>
</organism>
<accession>P69915</accession>
<accession>P31803</accession>
<comment type="function">
    <text evidence="1">A key translational regulator that binds mRNA to regulate translation initiation and/or mRNA stability. Mediates global changes in gene expression, shifting from rapid growth to stress survival by linking envelope stress, the stringent response and the catabolite repression systems. Usually binds in the 5'-UTR; binding at or near the Shine-Dalgarno sequence prevents ribosome-binding, repressing translation, binding elsewhere in the 5'-UTR can activate translation and/or stabilize the mRNA. Its function is antagonized by small RNA(s).</text>
</comment>
<comment type="subunit">
    <text evidence="1">Homodimer; the beta-strands of each monomer intercalate to form a hydrophobic core, while the alpha-helices form wings that extend away from the core.</text>
</comment>
<comment type="subcellular location">
    <subcellularLocation>
        <location evidence="1">Cytoplasm</location>
    </subcellularLocation>
</comment>
<comment type="similarity">
    <text evidence="1">Belongs to the CsrA/RsmA family.</text>
</comment>
<reference key="1">
    <citation type="journal article" date="2001" name="Nature">
        <title>Genome sequence of enterohaemorrhagic Escherichia coli O157:H7.</title>
        <authorList>
            <person name="Perna N.T."/>
            <person name="Plunkett G. III"/>
            <person name="Burland V."/>
            <person name="Mau B."/>
            <person name="Glasner J.D."/>
            <person name="Rose D.J."/>
            <person name="Mayhew G.F."/>
            <person name="Evans P.S."/>
            <person name="Gregor J."/>
            <person name="Kirkpatrick H.A."/>
            <person name="Posfai G."/>
            <person name="Hackett J."/>
            <person name="Klink S."/>
            <person name="Boutin A."/>
            <person name="Shao Y."/>
            <person name="Miller L."/>
            <person name="Grotbeck E.J."/>
            <person name="Davis N.W."/>
            <person name="Lim A."/>
            <person name="Dimalanta E.T."/>
            <person name="Potamousis K."/>
            <person name="Apodaca J."/>
            <person name="Anantharaman T.S."/>
            <person name="Lin J."/>
            <person name="Yen G."/>
            <person name="Schwartz D.C."/>
            <person name="Welch R.A."/>
            <person name="Blattner F.R."/>
        </authorList>
    </citation>
    <scope>NUCLEOTIDE SEQUENCE [LARGE SCALE GENOMIC DNA]</scope>
    <source>
        <strain>O157:H7 / EDL933 / ATCC 700927 / EHEC</strain>
    </source>
</reference>
<reference key="2">
    <citation type="journal article" date="2001" name="DNA Res.">
        <title>Complete genome sequence of enterohemorrhagic Escherichia coli O157:H7 and genomic comparison with a laboratory strain K-12.</title>
        <authorList>
            <person name="Hayashi T."/>
            <person name="Makino K."/>
            <person name="Ohnishi M."/>
            <person name="Kurokawa K."/>
            <person name="Ishii K."/>
            <person name="Yokoyama K."/>
            <person name="Han C.-G."/>
            <person name="Ohtsubo E."/>
            <person name="Nakayama K."/>
            <person name="Murata T."/>
            <person name="Tanaka M."/>
            <person name="Tobe T."/>
            <person name="Iida T."/>
            <person name="Takami H."/>
            <person name="Honda T."/>
            <person name="Sasakawa C."/>
            <person name="Ogasawara N."/>
            <person name="Yasunaga T."/>
            <person name="Kuhara S."/>
            <person name="Shiba T."/>
            <person name="Hattori M."/>
            <person name="Shinagawa H."/>
        </authorList>
    </citation>
    <scope>NUCLEOTIDE SEQUENCE [LARGE SCALE GENOMIC DNA]</scope>
    <source>
        <strain>O157:H7 / Sakai / RIMD 0509952 / EHEC</strain>
    </source>
</reference>
<proteinExistence type="inferred from homology"/>
<keyword id="KW-0010">Activator</keyword>
<keyword id="KW-0963">Cytoplasm</keyword>
<keyword id="KW-1185">Reference proteome</keyword>
<keyword id="KW-0678">Repressor</keyword>
<keyword id="KW-0694">RNA-binding</keyword>
<keyword id="KW-0810">Translation regulation</keyword>
<dbReference type="EMBL" id="AE005174">
    <property type="protein sequence ID" value="AAG57800.1"/>
    <property type="molecule type" value="Genomic_DNA"/>
</dbReference>
<dbReference type="EMBL" id="BA000007">
    <property type="protein sequence ID" value="BAB36976.1"/>
    <property type="molecule type" value="Genomic_DNA"/>
</dbReference>
<dbReference type="PIR" id="A91073">
    <property type="entry name" value="A91073"/>
</dbReference>
<dbReference type="PIR" id="D85917">
    <property type="entry name" value="D85917"/>
</dbReference>
<dbReference type="RefSeq" id="NP_311580.1">
    <property type="nucleotide sequence ID" value="NC_002695.1"/>
</dbReference>
<dbReference type="RefSeq" id="WP_000906486.1">
    <property type="nucleotide sequence ID" value="NZ_VOAI01000003.1"/>
</dbReference>
<dbReference type="SMR" id="P69915"/>
<dbReference type="STRING" id="155864.Z3998"/>
<dbReference type="GeneID" id="914725"/>
<dbReference type="GeneID" id="98389839"/>
<dbReference type="KEGG" id="ece:Z3998"/>
<dbReference type="KEGG" id="ecs:ECs_3553"/>
<dbReference type="PATRIC" id="fig|386585.9.peg.3709"/>
<dbReference type="eggNOG" id="COG1551">
    <property type="taxonomic scope" value="Bacteria"/>
</dbReference>
<dbReference type="HOGENOM" id="CLU_164837_2_1_6"/>
<dbReference type="OMA" id="VYRKEVY"/>
<dbReference type="Proteomes" id="UP000000558">
    <property type="component" value="Chromosome"/>
</dbReference>
<dbReference type="Proteomes" id="UP000002519">
    <property type="component" value="Chromosome"/>
</dbReference>
<dbReference type="GO" id="GO:0005829">
    <property type="term" value="C:cytosol"/>
    <property type="evidence" value="ECO:0007669"/>
    <property type="project" value="TreeGrafter"/>
</dbReference>
<dbReference type="GO" id="GO:0048027">
    <property type="term" value="F:mRNA 5'-UTR binding"/>
    <property type="evidence" value="ECO:0007669"/>
    <property type="project" value="UniProtKB-UniRule"/>
</dbReference>
<dbReference type="GO" id="GO:0006402">
    <property type="term" value="P:mRNA catabolic process"/>
    <property type="evidence" value="ECO:0007669"/>
    <property type="project" value="InterPro"/>
</dbReference>
<dbReference type="GO" id="GO:0045947">
    <property type="term" value="P:negative regulation of translational initiation"/>
    <property type="evidence" value="ECO:0007669"/>
    <property type="project" value="UniProtKB-UniRule"/>
</dbReference>
<dbReference type="GO" id="GO:0045948">
    <property type="term" value="P:positive regulation of translational initiation"/>
    <property type="evidence" value="ECO:0007669"/>
    <property type="project" value="UniProtKB-UniRule"/>
</dbReference>
<dbReference type="GO" id="GO:0006109">
    <property type="term" value="P:regulation of carbohydrate metabolic process"/>
    <property type="evidence" value="ECO:0007669"/>
    <property type="project" value="UniProtKB-UniRule"/>
</dbReference>
<dbReference type="FunFam" id="2.60.40.4380:FF:000001">
    <property type="entry name" value="Translational regulator CsrA"/>
    <property type="match status" value="1"/>
</dbReference>
<dbReference type="Gene3D" id="2.60.40.4380">
    <property type="entry name" value="Translational regulator CsrA"/>
    <property type="match status" value="1"/>
</dbReference>
<dbReference type="HAMAP" id="MF_00167">
    <property type="entry name" value="CsrA"/>
    <property type="match status" value="1"/>
</dbReference>
<dbReference type="InterPro" id="IPR003751">
    <property type="entry name" value="CsrA"/>
</dbReference>
<dbReference type="InterPro" id="IPR036107">
    <property type="entry name" value="CsrA_sf"/>
</dbReference>
<dbReference type="NCBIfam" id="TIGR00202">
    <property type="entry name" value="csrA"/>
    <property type="match status" value="1"/>
</dbReference>
<dbReference type="NCBIfam" id="NF002469">
    <property type="entry name" value="PRK01712.1"/>
    <property type="match status" value="1"/>
</dbReference>
<dbReference type="PANTHER" id="PTHR34984">
    <property type="entry name" value="CARBON STORAGE REGULATOR"/>
    <property type="match status" value="1"/>
</dbReference>
<dbReference type="PANTHER" id="PTHR34984:SF1">
    <property type="entry name" value="CARBON STORAGE REGULATOR"/>
    <property type="match status" value="1"/>
</dbReference>
<dbReference type="Pfam" id="PF02599">
    <property type="entry name" value="CsrA"/>
    <property type="match status" value="1"/>
</dbReference>
<dbReference type="SUPFAM" id="SSF117130">
    <property type="entry name" value="CsrA-like"/>
    <property type="match status" value="1"/>
</dbReference>
<feature type="chain" id="PRO_0000177063" description="Translational regulator CsrA">
    <location>
        <begin position="1"/>
        <end position="61"/>
    </location>
</feature>
<name>CSRA_ECO57</name>
<sequence length="61" mass="6856">MLILTRRVGETLMIGDEVTVTVLGVKGNQVRIGVNAPKEVSVHREEIYQRIQAEKSQQSSY</sequence>
<evidence type="ECO:0000255" key="1">
    <source>
        <dbReference type="HAMAP-Rule" id="MF_00167"/>
    </source>
</evidence>
<protein>
    <recommendedName>
        <fullName evidence="1">Translational regulator CsrA</fullName>
    </recommendedName>
    <alternativeName>
        <fullName evidence="1">Carbon storage regulator</fullName>
    </alternativeName>
</protein>